<reference key="1">
    <citation type="journal article" date="1997" name="Nature">
        <title>The nucleotide sequence of Saccharomyces cerevisiae chromosome VII.</title>
        <authorList>
            <person name="Tettelin H."/>
            <person name="Agostoni-Carbone M.L."/>
            <person name="Albermann K."/>
            <person name="Albers M."/>
            <person name="Arroyo J."/>
            <person name="Backes U."/>
            <person name="Barreiros T."/>
            <person name="Bertani I."/>
            <person name="Bjourson A.J."/>
            <person name="Brueckner M."/>
            <person name="Bruschi C.V."/>
            <person name="Carignani G."/>
            <person name="Castagnoli L."/>
            <person name="Cerdan E."/>
            <person name="Clemente M.L."/>
            <person name="Coblenz A."/>
            <person name="Coglievina M."/>
            <person name="Coissac E."/>
            <person name="Defoor E."/>
            <person name="Del Bino S."/>
            <person name="Delius H."/>
            <person name="Delneri D."/>
            <person name="de Wergifosse P."/>
            <person name="Dujon B."/>
            <person name="Durand P."/>
            <person name="Entian K.-D."/>
            <person name="Eraso P."/>
            <person name="Escribano V."/>
            <person name="Fabiani L."/>
            <person name="Fartmann B."/>
            <person name="Feroli F."/>
            <person name="Feuermann M."/>
            <person name="Frontali L."/>
            <person name="Garcia-Gonzalez M."/>
            <person name="Garcia-Saez M.I."/>
            <person name="Goffeau A."/>
            <person name="Guerreiro P."/>
            <person name="Hani J."/>
            <person name="Hansen M."/>
            <person name="Hebling U."/>
            <person name="Hernandez K."/>
            <person name="Heumann K."/>
            <person name="Hilger F."/>
            <person name="Hofmann B."/>
            <person name="Indge K.J."/>
            <person name="James C.M."/>
            <person name="Klima R."/>
            <person name="Koetter P."/>
            <person name="Kramer B."/>
            <person name="Kramer W."/>
            <person name="Lauquin G."/>
            <person name="Leuther H."/>
            <person name="Louis E.J."/>
            <person name="Maillier E."/>
            <person name="Marconi A."/>
            <person name="Martegani E."/>
            <person name="Mazon M.J."/>
            <person name="Mazzoni C."/>
            <person name="McReynolds A.D.K."/>
            <person name="Melchioretto P."/>
            <person name="Mewes H.-W."/>
            <person name="Minenkova O."/>
            <person name="Mueller-Auer S."/>
            <person name="Nawrocki A."/>
            <person name="Netter P."/>
            <person name="Neu R."/>
            <person name="Nombela C."/>
            <person name="Oliver S.G."/>
            <person name="Panzeri L."/>
            <person name="Paoluzi S."/>
            <person name="Plevani P."/>
            <person name="Portetelle D."/>
            <person name="Portillo F."/>
            <person name="Potier S."/>
            <person name="Purnelle B."/>
            <person name="Rieger M."/>
            <person name="Riles L."/>
            <person name="Rinaldi T."/>
            <person name="Robben J."/>
            <person name="Rodrigues-Pousada C."/>
            <person name="Rodriguez-Belmonte E."/>
            <person name="Rodriguez-Torres A.M."/>
            <person name="Rose M."/>
            <person name="Ruzzi M."/>
            <person name="Saliola M."/>
            <person name="Sanchez-Perez M."/>
            <person name="Schaefer B."/>
            <person name="Schaefer M."/>
            <person name="Scharfe M."/>
            <person name="Schmidheini T."/>
            <person name="Schreer A."/>
            <person name="Skala J."/>
            <person name="Souciet J.-L."/>
            <person name="Steensma H.Y."/>
            <person name="Talla E."/>
            <person name="Thierry A."/>
            <person name="Vandenbol M."/>
            <person name="van der Aart Q.J.M."/>
            <person name="Van Dyck L."/>
            <person name="Vanoni M."/>
            <person name="Verhasselt P."/>
            <person name="Voet M."/>
            <person name="Volckaert G."/>
            <person name="Wambutt R."/>
            <person name="Watson M.D."/>
            <person name="Weber N."/>
            <person name="Wedler E."/>
            <person name="Wedler H."/>
            <person name="Wipfli P."/>
            <person name="Wolf K."/>
            <person name="Wright L.F."/>
            <person name="Zaccaria P."/>
            <person name="Zimmermann M."/>
            <person name="Zollner A."/>
            <person name="Kleine K."/>
        </authorList>
    </citation>
    <scope>NUCLEOTIDE SEQUENCE [LARGE SCALE GENOMIC DNA]</scope>
    <source>
        <strain>ATCC 204508 / S288c</strain>
    </source>
</reference>
<reference key="2">
    <citation type="journal article" date="2014" name="G3 (Bethesda)">
        <title>The reference genome sequence of Saccharomyces cerevisiae: Then and now.</title>
        <authorList>
            <person name="Engel S.R."/>
            <person name="Dietrich F.S."/>
            <person name="Fisk D.G."/>
            <person name="Binkley G."/>
            <person name="Balakrishnan R."/>
            <person name="Costanzo M.C."/>
            <person name="Dwight S.S."/>
            <person name="Hitz B.C."/>
            <person name="Karra K."/>
            <person name="Nash R.S."/>
            <person name="Weng S."/>
            <person name="Wong E.D."/>
            <person name="Lloyd P."/>
            <person name="Skrzypek M.S."/>
            <person name="Miyasato S.R."/>
            <person name="Simison M."/>
            <person name="Cherry J.M."/>
        </authorList>
    </citation>
    <scope>GENOME REANNOTATION</scope>
    <source>
        <strain>ATCC 204508 / S288c</strain>
    </source>
</reference>
<reference key="3">
    <citation type="journal article" date="1991" name="Cell">
        <title>A cyclin B homolog in S. cerevisiae: chronic activation of the Cdc28 protein kinase by cyclin prevents exit from mitosis.</title>
        <authorList>
            <person name="Ghiara J.B."/>
            <person name="Richardson H.E."/>
            <person name="Sugimoto K."/>
            <person name="Henze M."/>
            <person name="Lew D.J."/>
            <person name="Wittenberg C."/>
            <person name="Reed S.I."/>
        </authorList>
    </citation>
    <scope>NUCLEOTIDE SEQUENCE [GENOMIC DNA] OF 9-149</scope>
</reference>
<gene>
    <name type="ordered locus">YGR107W</name>
</gene>
<protein>
    <recommendedName>
        <fullName>Putative uncharacterized protein YGR107W</fullName>
    </recommendedName>
</protein>
<name>YG2U_YEAST</name>
<feature type="chain" id="PRO_0000202812" description="Putative uncharacterized protein YGR107W">
    <location>
        <begin position="1"/>
        <end position="149"/>
    </location>
</feature>
<organism>
    <name type="scientific">Saccharomyces cerevisiae (strain ATCC 204508 / S288c)</name>
    <name type="common">Baker's yeast</name>
    <dbReference type="NCBI Taxonomy" id="559292"/>
    <lineage>
        <taxon>Eukaryota</taxon>
        <taxon>Fungi</taxon>
        <taxon>Dikarya</taxon>
        <taxon>Ascomycota</taxon>
        <taxon>Saccharomycotina</taxon>
        <taxon>Saccharomycetes</taxon>
        <taxon>Saccharomycetales</taxon>
        <taxon>Saccharomycetaceae</taxon>
        <taxon>Saccharomyces</taxon>
    </lineage>
</organism>
<proteinExistence type="uncertain"/>
<accession>P53263</accession>
<dbReference type="EMBL" id="Z72892">
    <property type="protein sequence ID" value="CAA97111.1"/>
    <property type="molecule type" value="Genomic_DNA"/>
</dbReference>
<dbReference type="EMBL" id="M62389">
    <property type="protein sequence ID" value="AAA35018.1"/>
    <property type="molecule type" value="Genomic_DNA"/>
</dbReference>
<dbReference type="PIR" id="S64414">
    <property type="entry name" value="S64414"/>
</dbReference>
<dbReference type="DIP" id="DIP-5278N"/>
<dbReference type="IntAct" id="P53263">
    <property type="interactions" value="1"/>
</dbReference>
<dbReference type="PaxDb" id="4932-YGR107W"/>
<dbReference type="EnsemblFungi" id="YGR107W_mRNA">
    <property type="protein sequence ID" value="YGR107W"/>
    <property type="gene ID" value="YGR107W"/>
</dbReference>
<dbReference type="AGR" id="SGD:S000003339"/>
<dbReference type="SGD" id="S000003339">
    <property type="gene designation" value="YGR107W"/>
</dbReference>
<dbReference type="HOGENOM" id="CLU_1751132_0_0_1"/>
<sequence>MVLSNYLVSFACTQSFFFFASNFIESPPALLKKAFLPNLNRTRSRFPPINYVLLAPLSSYCKWTFQRGYACPVSFLKQAHTDALQLVFFTRCIIWAVFHYRFRVGALTKRARPFVYNRPKRKNINNQEADTKYRSTIKLTSTVTLNLLY</sequence>
<comment type="caution">
    <text evidence="1">Product of a dubious gene prediction unlikely to encode a functional protein. Because of that it is not part of the S.cerevisiae S288c complete/reference proteome set.</text>
</comment>
<evidence type="ECO:0000305" key="1">
    <source>
    </source>
</evidence>